<feature type="chain" id="PRO_0000080913" description="Rho guanine nucleotide exchange factor 3">
    <location>
        <begin position="1"/>
        <end position="524"/>
    </location>
</feature>
<feature type="domain" description="DH" evidence="3">
    <location>
        <begin position="121"/>
        <end position="303"/>
    </location>
</feature>
<feature type="domain" description="PH" evidence="4">
    <location>
        <begin position="290"/>
        <end position="448"/>
    </location>
</feature>
<feature type="region of interest" description="Disordered" evidence="5">
    <location>
        <begin position="461"/>
        <end position="524"/>
    </location>
</feature>
<feature type="compositionally biased region" description="Basic and acidic residues" evidence="5">
    <location>
        <begin position="472"/>
        <end position="484"/>
    </location>
</feature>
<feature type="modified residue" description="Phosphoserine" evidence="2">
    <location>
        <position position="46"/>
    </location>
</feature>
<feature type="modified residue" description="Phosphoserine" evidence="1">
    <location>
        <position position="69"/>
    </location>
</feature>
<feature type="splice variant" id="VSP_011613" description="In isoform 2." evidence="7">
    <original>MVAKDYPFYLTVKRANCSLEAPLGSGVAKDE</original>
    <variation>MRSERPMVWCCFFLRAQRKRKQSSQDEDAVSLCSLDIS</variation>
    <location>
        <begin position="1"/>
        <end position="31"/>
    </location>
</feature>
<feature type="splice variant" id="VSP_011614" description="In isoform 3." evidence="7">
    <original>MVAKDYPFYLTVKRANCSLEAPLGSGVAKDE</original>
    <variation>MFPSPKACNFRGRKRKQSSQDEDAVSLCSLDIS</variation>
    <location>
        <begin position="1"/>
        <end position="31"/>
    </location>
</feature>
<feature type="sequence conflict" description="In Ref. 2; AAH05517." evidence="8" ref="2">
    <original>V</original>
    <variation>I</variation>
    <location>
        <position position="363"/>
    </location>
</feature>
<feature type="helix" evidence="9">
    <location>
        <begin position="117"/>
        <end position="146"/>
    </location>
</feature>
<feature type="helix" evidence="9">
    <location>
        <begin position="148"/>
        <end position="153"/>
    </location>
</feature>
<feature type="helix" evidence="9">
    <location>
        <begin position="159"/>
        <end position="166"/>
    </location>
</feature>
<feature type="helix" evidence="9">
    <location>
        <begin position="169"/>
        <end position="186"/>
    </location>
</feature>
<feature type="helix" evidence="9">
    <location>
        <begin position="197"/>
        <end position="203"/>
    </location>
</feature>
<feature type="helix" evidence="9">
    <location>
        <begin position="204"/>
        <end position="208"/>
    </location>
</feature>
<feature type="helix" evidence="9">
    <location>
        <begin position="209"/>
        <end position="227"/>
    </location>
</feature>
<feature type="helix" evidence="9">
    <location>
        <begin position="231"/>
        <end position="234"/>
    </location>
</feature>
<feature type="turn" evidence="9">
    <location>
        <begin position="251"/>
        <end position="253"/>
    </location>
</feature>
<feature type="helix" evidence="9">
    <location>
        <begin position="254"/>
        <end position="256"/>
    </location>
</feature>
<feature type="helix" evidence="9">
    <location>
        <begin position="257"/>
        <end position="274"/>
    </location>
</feature>
<feature type="helix" evidence="9">
    <location>
        <begin position="282"/>
        <end position="315"/>
    </location>
</feature>
<feature type="helix" evidence="9">
    <location>
        <begin position="326"/>
        <end position="329"/>
    </location>
</feature>
<feature type="strand" evidence="9">
    <location>
        <begin position="334"/>
        <end position="342"/>
    </location>
</feature>
<feature type="strand" evidence="9">
    <location>
        <begin position="347"/>
        <end position="365"/>
    </location>
</feature>
<feature type="strand" evidence="9">
    <location>
        <begin position="368"/>
        <end position="375"/>
    </location>
</feature>
<feature type="helix" evidence="9">
    <location>
        <begin position="380"/>
        <end position="382"/>
    </location>
</feature>
<feature type="strand" evidence="9">
    <location>
        <begin position="384"/>
        <end position="387"/>
    </location>
</feature>
<feature type="turn" evidence="9">
    <location>
        <begin position="390"/>
        <end position="392"/>
    </location>
</feature>
<feature type="helix" evidence="9">
    <location>
        <begin position="405"/>
        <end position="408"/>
    </location>
</feature>
<feature type="strand" evidence="9">
    <location>
        <begin position="410"/>
        <end position="417"/>
    </location>
</feature>
<feature type="helix" evidence="9">
    <location>
        <begin position="420"/>
        <end position="422"/>
    </location>
</feature>
<feature type="strand" evidence="9">
    <location>
        <begin position="424"/>
        <end position="429"/>
    </location>
</feature>
<feature type="helix" evidence="9">
    <location>
        <begin position="433"/>
        <end position="447"/>
    </location>
</feature>
<reference key="1">
    <citation type="journal article" date="2005" name="Science">
        <title>The transcriptional landscape of the mammalian genome.</title>
        <authorList>
            <person name="Carninci P."/>
            <person name="Kasukawa T."/>
            <person name="Katayama S."/>
            <person name="Gough J."/>
            <person name="Frith M.C."/>
            <person name="Maeda N."/>
            <person name="Oyama R."/>
            <person name="Ravasi T."/>
            <person name="Lenhard B."/>
            <person name="Wells C."/>
            <person name="Kodzius R."/>
            <person name="Shimokawa K."/>
            <person name="Bajic V.B."/>
            <person name="Brenner S.E."/>
            <person name="Batalov S."/>
            <person name="Forrest A.R."/>
            <person name="Zavolan M."/>
            <person name="Davis M.J."/>
            <person name="Wilming L.G."/>
            <person name="Aidinis V."/>
            <person name="Allen J.E."/>
            <person name="Ambesi-Impiombato A."/>
            <person name="Apweiler R."/>
            <person name="Aturaliya R.N."/>
            <person name="Bailey T.L."/>
            <person name="Bansal M."/>
            <person name="Baxter L."/>
            <person name="Beisel K.W."/>
            <person name="Bersano T."/>
            <person name="Bono H."/>
            <person name="Chalk A.M."/>
            <person name="Chiu K.P."/>
            <person name="Choudhary V."/>
            <person name="Christoffels A."/>
            <person name="Clutterbuck D.R."/>
            <person name="Crowe M.L."/>
            <person name="Dalla E."/>
            <person name="Dalrymple B.P."/>
            <person name="de Bono B."/>
            <person name="Della Gatta G."/>
            <person name="di Bernardo D."/>
            <person name="Down T."/>
            <person name="Engstrom P."/>
            <person name="Fagiolini M."/>
            <person name="Faulkner G."/>
            <person name="Fletcher C.F."/>
            <person name="Fukushima T."/>
            <person name="Furuno M."/>
            <person name="Futaki S."/>
            <person name="Gariboldi M."/>
            <person name="Georgii-Hemming P."/>
            <person name="Gingeras T.R."/>
            <person name="Gojobori T."/>
            <person name="Green R.E."/>
            <person name="Gustincich S."/>
            <person name="Harbers M."/>
            <person name="Hayashi Y."/>
            <person name="Hensch T.K."/>
            <person name="Hirokawa N."/>
            <person name="Hill D."/>
            <person name="Huminiecki L."/>
            <person name="Iacono M."/>
            <person name="Ikeo K."/>
            <person name="Iwama A."/>
            <person name="Ishikawa T."/>
            <person name="Jakt M."/>
            <person name="Kanapin A."/>
            <person name="Katoh M."/>
            <person name="Kawasawa Y."/>
            <person name="Kelso J."/>
            <person name="Kitamura H."/>
            <person name="Kitano H."/>
            <person name="Kollias G."/>
            <person name="Krishnan S.P."/>
            <person name="Kruger A."/>
            <person name="Kummerfeld S.K."/>
            <person name="Kurochkin I.V."/>
            <person name="Lareau L.F."/>
            <person name="Lazarevic D."/>
            <person name="Lipovich L."/>
            <person name="Liu J."/>
            <person name="Liuni S."/>
            <person name="McWilliam S."/>
            <person name="Madan Babu M."/>
            <person name="Madera M."/>
            <person name="Marchionni L."/>
            <person name="Matsuda H."/>
            <person name="Matsuzawa S."/>
            <person name="Miki H."/>
            <person name="Mignone F."/>
            <person name="Miyake S."/>
            <person name="Morris K."/>
            <person name="Mottagui-Tabar S."/>
            <person name="Mulder N."/>
            <person name="Nakano N."/>
            <person name="Nakauchi H."/>
            <person name="Ng P."/>
            <person name="Nilsson R."/>
            <person name="Nishiguchi S."/>
            <person name="Nishikawa S."/>
            <person name="Nori F."/>
            <person name="Ohara O."/>
            <person name="Okazaki Y."/>
            <person name="Orlando V."/>
            <person name="Pang K.C."/>
            <person name="Pavan W.J."/>
            <person name="Pavesi G."/>
            <person name="Pesole G."/>
            <person name="Petrovsky N."/>
            <person name="Piazza S."/>
            <person name="Reed J."/>
            <person name="Reid J.F."/>
            <person name="Ring B.Z."/>
            <person name="Ringwald M."/>
            <person name="Rost B."/>
            <person name="Ruan Y."/>
            <person name="Salzberg S.L."/>
            <person name="Sandelin A."/>
            <person name="Schneider C."/>
            <person name="Schoenbach C."/>
            <person name="Sekiguchi K."/>
            <person name="Semple C.A."/>
            <person name="Seno S."/>
            <person name="Sessa L."/>
            <person name="Sheng Y."/>
            <person name="Shibata Y."/>
            <person name="Shimada H."/>
            <person name="Shimada K."/>
            <person name="Silva D."/>
            <person name="Sinclair B."/>
            <person name="Sperling S."/>
            <person name="Stupka E."/>
            <person name="Sugiura K."/>
            <person name="Sultana R."/>
            <person name="Takenaka Y."/>
            <person name="Taki K."/>
            <person name="Tammoja K."/>
            <person name="Tan S.L."/>
            <person name="Tang S."/>
            <person name="Taylor M.S."/>
            <person name="Tegner J."/>
            <person name="Teichmann S.A."/>
            <person name="Ueda H.R."/>
            <person name="van Nimwegen E."/>
            <person name="Verardo R."/>
            <person name="Wei C.L."/>
            <person name="Yagi K."/>
            <person name="Yamanishi H."/>
            <person name="Zabarovsky E."/>
            <person name="Zhu S."/>
            <person name="Zimmer A."/>
            <person name="Hide W."/>
            <person name="Bult C."/>
            <person name="Grimmond S.M."/>
            <person name="Teasdale R.D."/>
            <person name="Liu E.T."/>
            <person name="Brusic V."/>
            <person name="Quackenbush J."/>
            <person name="Wahlestedt C."/>
            <person name="Mattick J.S."/>
            <person name="Hume D.A."/>
            <person name="Kai C."/>
            <person name="Sasaki D."/>
            <person name="Tomaru Y."/>
            <person name="Fukuda S."/>
            <person name="Kanamori-Katayama M."/>
            <person name="Suzuki M."/>
            <person name="Aoki J."/>
            <person name="Arakawa T."/>
            <person name="Iida J."/>
            <person name="Imamura K."/>
            <person name="Itoh M."/>
            <person name="Kato T."/>
            <person name="Kawaji H."/>
            <person name="Kawagashira N."/>
            <person name="Kawashima T."/>
            <person name="Kojima M."/>
            <person name="Kondo S."/>
            <person name="Konno H."/>
            <person name="Nakano K."/>
            <person name="Ninomiya N."/>
            <person name="Nishio T."/>
            <person name="Okada M."/>
            <person name="Plessy C."/>
            <person name="Shibata K."/>
            <person name="Shiraki T."/>
            <person name="Suzuki S."/>
            <person name="Tagami M."/>
            <person name="Waki K."/>
            <person name="Watahiki A."/>
            <person name="Okamura-Oho Y."/>
            <person name="Suzuki H."/>
            <person name="Kawai J."/>
            <person name="Hayashizaki Y."/>
        </authorList>
    </citation>
    <scope>NUCLEOTIDE SEQUENCE [LARGE SCALE MRNA] (ISOFORMS 2 AND 3)</scope>
    <source>
        <strain>C57BL/6J</strain>
        <tissue>Lung</tissue>
        <tissue>Testis</tissue>
    </source>
</reference>
<reference key="2">
    <citation type="journal article" date="2004" name="Genome Res.">
        <title>The status, quality, and expansion of the NIH full-length cDNA project: the Mammalian Gene Collection (MGC).</title>
        <authorList>
            <consortium name="The MGC Project Team"/>
        </authorList>
    </citation>
    <scope>NUCLEOTIDE SEQUENCE [LARGE SCALE MRNA] (ISOFORM 1)</scope>
    <source>
        <strain>Czech II</strain>
        <strain>FVB/N</strain>
        <tissue>Mammary tumor</tissue>
        <tissue>Salivary gland</tissue>
    </source>
</reference>
<reference key="3">
    <citation type="journal article" date="2002" name="J. Biol. Chem.">
        <title>The Rho exchange factor Net1 is regulated by nuclear sequestration.</title>
        <authorList>
            <person name="Schmidt A."/>
            <person name="Hall A."/>
        </authorList>
    </citation>
    <scope>FUNCTION</scope>
    <scope>SUBCELLULAR LOCATION</scope>
</reference>
<reference key="4">
    <citation type="journal article" date="2012" name="Acta Crystallogr. F">
        <title>Structure of the Rho-specific guanine nucleotide-exchange factor Xpln.</title>
        <authorList>
            <person name="Murayama K."/>
            <person name="Kato-Murayama M."/>
            <person name="Akasaka R."/>
            <person name="Terada T."/>
            <person name="Yokoyama S."/>
            <person name="Shirouzu M."/>
        </authorList>
    </citation>
    <scope>X-RAY CRYSTALLOGRAPHY (1.79 ANGSTROMS) OF 110-448</scope>
</reference>
<gene>
    <name type="primary">Arhgef3</name>
</gene>
<sequence>MVAKDYPFYLTVKRANCSLEAPLGSGVAKDEEPSNKRVKPLSRVTSLANLIPPVKTTPLKRFSQTLQRSISFRSESRPDILAPRAWSRNATSSSTKRRDSKLWSETFDVCVNQVLTAKEIKRQEAIFELSQGEEDLIEDLKLAKKAYHDPMLKLSIMTEQELNQIFGTLDSLIPLHEELLSQLRDVRKPDGSTEHVGPILVGWLPCLSSYDSYCSNQVAAKALLDHKKQDHRVQDFLQRCLESPFSRKLDLWNFLDIPRSRLVKYPLLLREILRHTPNDNPDQQHLEEAINIIQGIVAEINTKTGESECRYYKERLLYLEEGQKDSLIDSSRVLCCHGELKNNRGVKLHVFLFQEVLVITRAVTHNEQLCYQLYRQPIPVKDLTLEDLQDGEVRLGGSLRGAFSNNERVKNFFRVSFKNGSQSQTHSLQANDTFNKQQWLNCIRQAKETVLSAAGQAGLLDSEGLVQGPGTENREPQGETKLEQMDQSDSESDCSMDTSEVSLECERMEQTDASCANSRPEESV</sequence>
<comment type="function">
    <text evidence="6">Acts as a guanine nucleotide exchange factor (GEF) for RhoA and RhoB GTPases.</text>
</comment>
<comment type="subunit">
    <text>Interacts with RHOA and RHOB.</text>
</comment>
<comment type="subcellular location">
    <subcellularLocation>
        <location evidence="6">Cytoplasm</location>
    </subcellularLocation>
</comment>
<comment type="alternative products">
    <event type="alternative splicing"/>
    <isoform>
        <id>Q91X46-1</id>
        <name>1</name>
        <sequence type="displayed"/>
    </isoform>
    <isoform>
        <id>Q91X46-2</id>
        <name>2</name>
        <sequence type="described" ref="VSP_011613"/>
    </isoform>
    <isoform>
        <id>Q91X46-3</id>
        <name>3</name>
        <sequence type="described" ref="VSP_011614"/>
    </isoform>
</comment>
<comment type="sequence caution" evidence="8">
    <conflict type="erroneous initiation">
        <sequence resource="EMBL-CDS" id="AAH07153"/>
    </conflict>
</comment>
<name>ARHG3_MOUSE</name>
<accession>Q91X46</accession>
<accession>Q8CDM0</accession>
<accession>Q91VY4</accession>
<accession>Q99K14</accession>
<accession>Q9DC31</accession>
<dbReference type="EMBL" id="AK004600">
    <property type="protein sequence ID" value="BAB23401.1"/>
    <property type="molecule type" value="mRNA"/>
</dbReference>
<dbReference type="EMBL" id="AK029872">
    <property type="protein sequence ID" value="BAC26652.1"/>
    <property type="molecule type" value="mRNA"/>
</dbReference>
<dbReference type="EMBL" id="BC005517">
    <property type="protein sequence ID" value="AAH05517.1"/>
    <property type="molecule type" value="mRNA"/>
</dbReference>
<dbReference type="EMBL" id="BC007153">
    <property type="protein sequence ID" value="AAH07153.1"/>
    <property type="status" value="ALT_INIT"/>
    <property type="molecule type" value="mRNA"/>
</dbReference>
<dbReference type="EMBL" id="BC012262">
    <property type="protein sequence ID" value="AAH12262.1"/>
    <property type="molecule type" value="mRNA"/>
</dbReference>
<dbReference type="CCDS" id="CCDS26886.1">
    <molecule id="Q91X46-2"/>
</dbReference>
<dbReference type="CCDS" id="CCDS88606.1">
    <molecule id="Q91X46-1"/>
</dbReference>
<dbReference type="RefSeq" id="NP_001276615.1">
    <property type="nucleotide sequence ID" value="NM_001289686.1"/>
</dbReference>
<dbReference type="RefSeq" id="NP_001276616.1">
    <molecule id="Q91X46-1"/>
    <property type="nucleotide sequence ID" value="NM_001289687.1"/>
</dbReference>
<dbReference type="RefSeq" id="NP_001276617.1">
    <property type="nucleotide sequence ID" value="NM_001289688.1"/>
</dbReference>
<dbReference type="RefSeq" id="NP_082147.1">
    <molecule id="Q91X46-2"/>
    <property type="nucleotide sequence ID" value="NM_027871.2"/>
</dbReference>
<dbReference type="PDB" id="2Z0Q">
    <property type="method" value="X-ray"/>
    <property type="resolution" value="1.79 A"/>
    <property type="chains" value="A=110-448"/>
</dbReference>
<dbReference type="PDBsum" id="2Z0Q"/>
<dbReference type="SMR" id="Q91X46"/>
<dbReference type="BioGRID" id="214868">
    <property type="interactions" value="3"/>
</dbReference>
<dbReference type="FunCoup" id="Q91X46">
    <property type="interactions" value="665"/>
</dbReference>
<dbReference type="IntAct" id="Q91X46">
    <property type="interactions" value="1"/>
</dbReference>
<dbReference type="STRING" id="10090.ENSMUSP00000046486"/>
<dbReference type="iPTMnet" id="Q91X46"/>
<dbReference type="PhosphoSitePlus" id="Q91X46"/>
<dbReference type="jPOST" id="Q91X46"/>
<dbReference type="PaxDb" id="10090-ENSMUSP00000046486"/>
<dbReference type="PeptideAtlas" id="Q91X46"/>
<dbReference type="ProteomicsDB" id="273923">
    <molecule id="Q91X46-1"/>
</dbReference>
<dbReference type="ProteomicsDB" id="273924">
    <molecule id="Q91X46-2"/>
</dbReference>
<dbReference type="ProteomicsDB" id="273925">
    <molecule id="Q91X46-3"/>
</dbReference>
<dbReference type="Antibodypedia" id="31503">
    <property type="antibodies" value="188 antibodies from 24 providers"/>
</dbReference>
<dbReference type="DNASU" id="71704"/>
<dbReference type="Ensembl" id="ENSMUST00000049206.6">
    <molecule id="Q91X46-2"/>
    <property type="protein sequence ID" value="ENSMUSP00000046486.6"/>
    <property type="gene ID" value="ENSMUSG00000021895.11"/>
</dbReference>
<dbReference type="Ensembl" id="ENSMUST00000224981.2">
    <molecule id="Q91X46-1"/>
    <property type="protein sequence ID" value="ENSMUSP00000153124.2"/>
    <property type="gene ID" value="ENSMUSG00000021895.11"/>
</dbReference>
<dbReference type="GeneID" id="71704"/>
<dbReference type="KEGG" id="mmu:71704"/>
<dbReference type="UCSC" id="uc007sto.2">
    <molecule id="Q91X46-2"/>
    <property type="organism name" value="mouse"/>
</dbReference>
<dbReference type="UCSC" id="uc007str.2">
    <molecule id="Q91X46-1"/>
    <property type="organism name" value="mouse"/>
</dbReference>
<dbReference type="AGR" id="MGI:1918954"/>
<dbReference type="CTD" id="50650"/>
<dbReference type="MGI" id="MGI:1918954">
    <property type="gene designation" value="Arhgef3"/>
</dbReference>
<dbReference type="VEuPathDB" id="HostDB:ENSMUSG00000021895"/>
<dbReference type="eggNOG" id="KOG4305">
    <property type="taxonomic scope" value="Eukaryota"/>
</dbReference>
<dbReference type="GeneTree" id="ENSGT00940000158385"/>
<dbReference type="HOGENOM" id="CLU_027428_3_0_1"/>
<dbReference type="InParanoid" id="Q91X46"/>
<dbReference type="OMA" id="QCVFREM"/>
<dbReference type="OrthoDB" id="1716625at2759"/>
<dbReference type="PhylomeDB" id="Q91X46"/>
<dbReference type="TreeFam" id="TF328974"/>
<dbReference type="Reactome" id="R-MMU-193648">
    <property type="pathway name" value="NRAGE signals death through JNK"/>
</dbReference>
<dbReference type="Reactome" id="R-MMU-416482">
    <property type="pathway name" value="G alpha (12/13) signalling events"/>
</dbReference>
<dbReference type="Reactome" id="R-MMU-8980692">
    <property type="pathway name" value="RHOA GTPase cycle"/>
</dbReference>
<dbReference type="Reactome" id="R-MMU-9013026">
    <property type="pathway name" value="RHOB GTPase cycle"/>
</dbReference>
<dbReference type="BioGRID-ORCS" id="71704">
    <property type="hits" value="3 hits in 75 CRISPR screens"/>
</dbReference>
<dbReference type="ChiTaRS" id="Arhgef3">
    <property type="organism name" value="mouse"/>
</dbReference>
<dbReference type="EvolutionaryTrace" id="Q91X46"/>
<dbReference type="PRO" id="PR:Q91X46"/>
<dbReference type="Proteomes" id="UP000000589">
    <property type="component" value="Chromosome 14"/>
</dbReference>
<dbReference type="RNAct" id="Q91X46">
    <property type="molecule type" value="protein"/>
</dbReference>
<dbReference type="Bgee" id="ENSMUSG00000021895">
    <property type="expression patterns" value="Expressed in granulocyte and 250 other cell types or tissues"/>
</dbReference>
<dbReference type="ExpressionAtlas" id="Q91X46">
    <property type="expression patterns" value="baseline and differential"/>
</dbReference>
<dbReference type="GO" id="GO:0005737">
    <property type="term" value="C:cytoplasm"/>
    <property type="evidence" value="ECO:0007669"/>
    <property type="project" value="UniProtKB-SubCell"/>
</dbReference>
<dbReference type="GO" id="GO:0005085">
    <property type="term" value="F:guanyl-nucleotide exchange factor activity"/>
    <property type="evidence" value="ECO:0007669"/>
    <property type="project" value="UniProtKB-KW"/>
</dbReference>
<dbReference type="GO" id="GO:0035556">
    <property type="term" value="P:intracellular signal transduction"/>
    <property type="evidence" value="ECO:0007669"/>
    <property type="project" value="InterPro"/>
</dbReference>
<dbReference type="CDD" id="cd10572">
    <property type="entry name" value="PH_RhoGEF3_XPLN"/>
    <property type="match status" value="1"/>
</dbReference>
<dbReference type="CDD" id="cd00160">
    <property type="entry name" value="RhoGEF"/>
    <property type="match status" value="1"/>
</dbReference>
<dbReference type="FunFam" id="2.30.29.30:FF:000151">
    <property type="entry name" value="Rho guanine nucleotide exchange factor 3"/>
    <property type="match status" value="1"/>
</dbReference>
<dbReference type="FunFam" id="1.20.900.10:FF:000010">
    <property type="entry name" value="Rho guanine nucleotide exchange factor 3 isoform 1"/>
    <property type="match status" value="1"/>
</dbReference>
<dbReference type="Gene3D" id="1.20.900.10">
    <property type="entry name" value="Dbl homology (DH) domain"/>
    <property type="match status" value="1"/>
</dbReference>
<dbReference type="Gene3D" id="2.30.29.30">
    <property type="entry name" value="Pleckstrin-homology domain (PH domain)/Phosphotyrosine-binding domain (PTB)"/>
    <property type="match status" value="1"/>
</dbReference>
<dbReference type="InterPro" id="IPR035899">
    <property type="entry name" value="DBL_dom_sf"/>
</dbReference>
<dbReference type="InterPro" id="IPR000219">
    <property type="entry name" value="DH_dom"/>
</dbReference>
<dbReference type="InterPro" id="IPR051480">
    <property type="entry name" value="Endocytic_GEF_Adapter"/>
</dbReference>
<dbReference type="InterPro" id="IPR001331">
    <property type="entry name" value="GDS_CDC24_CS"/>
</dbReference>
<dbReference type="InterPro" id="IPR011993">
    <property type="entry name" value="PH-like_dom_sf"/>
</dbReference>
<dbReference type="InterPro" id="IPR001849">
    <property type="entry name" value="PH_domain"/>
</dbReference>
<dbReference type="InterPro" id="IPR044129">
    <property type="entry name" value="PH_RhoGEF3_XPLN"/>
</dbReference>
<dbReference type="InterPro" id="IPR055251">
    <property type="entry name" value="SOS1_NGEF_PH"/>
</dbReference>
<dbReference type="PANTHER" id="PTHR46006:SF2">
    <property type="entry name" value="RHO GUANINE NUCLEOTIDE EXCHANGE FACTOR 3"/>
    <property type="match status" value="1"/>
</dbReference>
<dbReference type="PANTHER" id="PTHR46006">
    <property type="entry name" value="RHO GUANINE NUCLEOTIDE EXCHANGE FACTOR AT 64C, ISOFORM A"/>
    <property type="match status" value="1"/>
</dbReference>
<dbReference type="Pfam" id="PF00621">
    <property type="entry name" value="RhoGEF"/>
    <property type="match status" value="1"/>
</dbReference>
<dbReference type="Pfam" id="PF22697">
    <property type="entry name" value="SOS1_NGEF_PH"/>
    <property type="match status" value="1"/>
</dbReference>
<dbReference type="SMART" id="SM00233">
    <property type="entry name" value="PH"/>
    <property type="match status" value="1"/>
</dbReference>
<dbReference type="SMART" id="SM00325">
    <property type="entry name" value="RhoGEF"/>
    <property type="match status" value="1"/>
</dbReference>
<dbReference type="SUPFAM" id="SSF48065">
    <property type="entry name" value="DBL homology domain (DH-domain)"/>
    <property type="match status" value="1"/>
</dbReference>
<dbReference type="SUPFAM" id="SSF50729">
    <property type="entry name" value="PH domain-like"/>
    <property type="match status" value="1"/>
</dbReference>
<dbReference type="PROSITE" id="PS00741">
    <property type="entry name" value="DH_1"/>
    <property type="match status" value="1"/>
</dbReference>
<dbReference type="PROSITE" id="PS50010">
    <property type="entry name" value="DH_2"/>
    <property type="match status" value="1"/>
</dbReference>
<dbReference type="PROSITE" id="PS50003">
    <property type="entry name" value="PH_DOMAIN"/>
    <property type="match status" value="1"/>
</dbReference>
<protein>
    <recommendedName>
        <fullName>Rho guanine nucleotide exchange factor 3</fullName>
    </recommendedName>
</protein>
<proteinExistence type="evidence at protein level"/>
<organism>
    <name type="scientific">Mus musculus</name>
    <name type="common">Mouse</name>
    <dbReference type="NCBI Taxonomy" id="10090"/>
    <lineage>
        <taxon>Eukaryota</taxon>
        <taxon>Metazoa</taxon>
        <taxon>Chordata</taxon>
        <taxon>Craniata</taxon>
        <taxon>Vertebrata</taxon>
        <taxon>Euteleostomi</taxon>
        <taxon>Mammalia</taxon>
        <taxon>Eutheria</taxon>
        <taxon>Euarchontoglires</taxon>
        <taxon>Glires</taxon>
        <taxon>Rodentia</taxon>
        <taxon>Myomorpha</taxon>
        <taxon>Muroidea</taxon>
        <taxon>Muridae</taxon>
        <taxon>Murinae</taxon>
        <taxon>Mus</taxon>
        <taxon>Mus</taxon>
    </lineage>
</organism>
<keyword id="KW-0002">3D-structure</keyword>
<keyword id="KW-0025">Alternative splicing</keyword>
<keyword id="KW-0963">Cytoplasm</keyword>
<keyword id="KW-0344">Guanine-nucleotide releasing factor</keyword>
<keyword id="KW-0597">Phosphoprotein</keyword>
<keyword id="KW-1185">Reference proteome</keyword>
<evidence type="ECO:0000250" key="1">
    <source>
        <dbReference type="UniProtKB" id="Q7Z628"/>
    </source>
</evidence>
<evidence type="ECO:0000250" key="2">
    <source>
        <dbReference type="UniProtKB" id="Q9NR81"/>
    </source>
</evidence>
<evidence type="ECO:0000255" key="3">
    <source>
        <dbReference type="PROSITE-ProRule" id="PRU00062"/>
    </source>
</evidence>
<evidence type="ECO:0000255" key="4">
    <source>
        <dbReference type="PROSITE-ProRule" id="PRU00145"/>
    </source>
</evidence>
<evidence type="ECO:0000256" key="5">
    <source>
        <dbReference type="SAM" id="MobiDB-lite"/>
    </source>
</evidence>
<evidence type="ECO:0000269" key="6">
    <source>
    </source>
</evidence>
<evidence type="ECO:0000303" key="7">
    <source>
    </source>
</evidence>
<evidence type="ECO:0000305" key="8"/>
<evidence type="ECO:0007829" key="9">
    <source>
        <dbReference type="PDB" id="2Z0Q"/>
    </source>
</evidence>